<proteinExistence type="inferred from homology"/>
<organism>
    <name type="scientific">Rubrobacter xylanophilus (strain DSM 9941 / JCM 11954 / NBRC 16129 / PRD-1)</name>
    <dbReference type="NCBI Taxonomy" id="266117"/>
    <lineage>
        <taxon>Bacteria</taxon>
        <taxon>Bacillati</taxon>
        <taxon>Actinomycetota</taxon>
        <taxon>Rubrobacteria</taxon>
        <taxon>Rubrobacterales</taxon>
        <taxon>Rubrobacteraceae</taxon>
        <taxon>Rubrobacter</taxon>
    </lineage>
</organism>
<protein>
    <recommendedName>
        <fullName evidence="1">Type III pantothenate kinase</fullName>
        <ecNumber evidence="1">2.7.1.33</ecNumber>
    </recommendedName>
    <alternativeName>
        <fullName evidence="1">PanK-III</fullName>
    </alternativeName>
    <alternativeName>
        <fullName evidence="1">Pantothenic acid kinase</fullName>
    </alternativeName>
</protein>
<dbReference type="EC" id="2.7.1.33" evidence="1"/>
<dbReference type="EMBL" id="CP000386">
    <property type="protein sequence ID" value="ABG05126.1"/>
    <property type="molecule type" value="Genomic_DNA"/>
</dbReference>
<dbReference type="SMR" id="Q1AU02"/>
<dbReference type="STRING" id="266117.Rxyl_2182"/>
<dbReference type="KEGG" id="rxy:Rxyl_2182"/>
<dbReference type="eggNOG" id="COG1521">
    <property type="taxonomic scope" value="Bacteria"/>
</dbReference>
<dbReference type="HOGENOM" id="CLU_066627_1_0_11"/>
<dbReference type="PhylomeDB" id="Q1AU02"/>
<dbReference type="UniPathway" id="UPA00241">
    <property type="reaction ID" value="UER00352"/>
</dbReference>
<dbReference type="Proteomes" id="UP000006637">
    <property type="component" value="Chromosome"/>
</dbReference>
<dbReference type="GO" id="GO:0005737">
    <property type="term" value="C:cytoplasm"/>
    <property type="evidence" value="ECO:0007669"/>
    <property type="project" value="UniProtKB-SubCell"/>
</dbReference>
<dbReference type="GO" id="GO:0005524">
    <property type="term" value="F:ATP binding"/>
    <property type="evidence" value="ECO:0007669"/>
    <property type="project" value="UniProtKB-UniRule"/>
</dbReference>
<dbReference type="GO" id="GO:0046872">
    <property type="term" value="F:metal ion binding"/>
    <property type="evidence" value="ECO:0007669"/>
    <property type="project" value="UniProtKB-KW"/>
</dbReference>
<dbReference type="GO" id="GO:0004594">
    <property type="term" value="F:pantothenate kinase activity"/>
    <property type="evidence" value="ECO:0007669"/>
    <property type="project" value="UniProtKB-UniRule"/>
</dbReference>
<dbReference type="GO" id="GO:0015937">
    <property type="term" value="P:coenzyme A biosynthetic process"/>
    <property type="evidence" value="ECO:0007669"/>
    <property type="project" value="UniProtKB-UniRule"/>
</dbReference>
<dbReference type="CDD" id="cd24015">
    <property type="entry name" value="ASKHA_NBD_PanK-III"/>
    <property type="match status" value="1"/>
</dbReference>
<dbReference type="Gene3D" id="3.30.420.40">
    <property type="match status" value="2"/>
</dbReference>
<dbReference type="HAMAP" id="MF_01274">
    <property type="entry name" value="Pantothen_kinase_3"/>
    <property type="match status" value="1"/>
</dbReference>
<dbReference type="InterPro" id="IPR043129">
    <property type="entry name" value="ATPase_NBD"/>
</dbReference>
<dbReference type="InterPro" id="IPR004619">
    <property type="entry name" value="Type_III_PanK"/>
</dbReference>
<dbReference type="NCBIfam" id="TIGR00671">
    <property type="entry name" value="baf"/>
    <property type="match status" value="1"/>
</dbReference>
<dbReference type="NCBIfam" id="NF009855">
    <property type="entry name" value="PRK13321.1"/>
    <property type="match status" value="1"/>
</dbReference>
<dbReference type="PANTHER" id="PTHR34265">
    <property type="entry name" value="TYPE III PANTOTHENATE KINASE"/>
    <property type="match status" value="1"/>
</dbReference>
<dbReference type="PANTHER" id="PTHR34265:SF1">
    <property type="entry name" value="TYPE III PANTOTHENATE KINASE"/>
    <property type="match status" value="1"/>
</dbReference>
<dbReference type="Pfam" id="PF03309">
    <property type="entry name" value="Pan_kinase"/>
    <property type="match status" value="1"/>
</dbReference>
<dbReference type="SUPFAM" id="SSF53067">
    <property type="entry name" value="Actin-like ATPase domain"/>
    <property type="match status" value="2"/>
</dbReference>
<name>COAX_RUBXD</name>
<sequence length="264" mass="28214">MLMAVDIGNTQTVLGYFEGERLRASWRMTTEPYRSPDEVGAACAALFALRGLSLEDADAMIVSSVVPDLTGTYRHLAADILQVPFYAVGPEMDLGMENRYDDPSAVGADRLVNAVAARRYYGAPAIIADSGTATTVCAVDAGGAYRGGAILPGLYVSMDALASRTAKLPRVDLEEEPPRAIATNTPDSIRSGFIYGYAGAIDALIRRFKEELAAEGETEGLRVVATGGLSPVISRYCREIEVLDPDLTLKGLQVLYALNASRAR</sequence>
<gene>
    <name evidence="1" type="primary">coaX</name>
    <name type="ordered locus">Rxyl_2182</name>
</gene>
<comment type="function">
    <text evidence="1">Catalyzes the phosphorylation of pantothenate (Pan), the first step in CoA biosynthesis.</text>
</comment>
<comment type="catalytic activity">
    <reaction evidence="1">
        <text>(R)-pantothenate + ATP = (R)-4'-phosphopantothenate + ADP + H(+)</text>
        <dbReference type="Rhea" id="RHEA:16373"/>
        <dbReference type="ChEBI" id="CHEBI:10986"/>
        <dbReference type="ChEBI" id="CHEBI:15378"/>
        <dbReference type="ChEBI" id="CHEBI:29032"/>
        <dbReference type="ChEBI" id="CHEBI:30616"/>
        <dbReference type="ChEBI" id="CHEBI:456216"/>
        <dbReference type="EC" id="2.7.1.33"/>
    </reaction>
</comment>
<comment type="cofactor">
    <cofactor evidence="1">
        <name>NH4(+)</name>
        <dbReference type="ChEBI" id="CHEBI:28938"/>
    </cofactor>
    <cofactor evidence="1">
        <name>K(+)</name>
        <dbReference type="ChEBI" id="CHEBI:29103"/>
    </cofactor>
    <text evidence="1">A monovalent cation. Ammonium or potassium.</text>
</comment>
<comment type="pathway">
    <text evidence="1">Cofactor biosynthesis; coenzyme A biosynthesis; CoA from (R)-pantothenate: step 1/5.</text>
</comment>
<comment type="subunit">
    <text evidence="1">Homodimer.</text>
</comment>
<comment type="subcellular location">
    <subcellularLocation>
        <location evidence="1">Cytoplasm</location>
    </subcellularLocation>
</comment>
<comment type="similarity">
    <text evidence="1">Belongs to the type III pantothenate kinase family.</text>
</comment>
<reference key="1">
    <citation type="submission" date="2006-06" db="EMBL/GenBank/DDBJ databases">
        <title>Complete sequence of Rubrobacter xylanophilus DSM 9941.</title>
        <authorList>
            <consortium name="US DOE Joint Genome Institute"/>
            <person name="Copeland A."/>
            <person name="Lucas S."/>
            <person name="Lapidus A."/>
            <person name="Barry K."/>
            <person name="Detter J.C."/>
            <person name="Glavina del Rio T."/>
            <person name="Hammon N."/>
            <person name="Israni S."/>
            <person name="Dalin E."/>
            <person name="Tice H."/>
            <person name="Pitluck S."/>
            <person name="Munk A.C."/>
            <person name="Brettin T."/>
            <person name="Bruce D."/>
            <person name="Han C."/>
            <person name="Tapia R."/>
            <person name="Gilna P."/>
            <person name="Schmutz J."/>
            <person name="Larimer F."/>
            <person name="Land M."/>
            <person name="Hauser L."/>
            <person name="Kyrpides N."/>
            <person name="Lykidis A."/>
            <person name="da Costa M.S."/>
            <person name="Rainey F.A."/>
            <person name="Empadinhas N."/>
            <person name="Jolivet E."/>
            <person name="Battista J.R."/>
            <person name="Richardson P."/>
        </authorList>
    </citation>
    <scope>NUCLEOTIDE SEQUENCE [LARGE SCALE GENOMIC DNA]</scope>
    <source>
        <strain>DSM 9941 / JCM 11954 / NBRC 16129 / PRD-1</strain>
    </source>
</reference>
<evidence type="ECO:0000255" key="1">
    <source>
        <dbReference type="HAMAP-Rule" id="MF_01274"/>
    </source>
</evidence>
<accession>Q1AU02</accession>
<keyword id="KW-0067">ATP-binding</keyword>
<keyword id="KW-0173">Coenzyme A biosynthesis</keyword>
<keyword id="KW-0963">Cytoplasm</keyword>
<keyword id="KW-0418">Kinase</keyword>
<keyword id="KW-0479">Metal-binding</keyword>
<keyword id="KW-0547">Nucleotide-binding</keyword>
<keyword id="KW-0630">Potassium</keyword>
<keyword id="KW-1185">Reference proteome</keyword>
<keyword id="KW-0808">Transferase</keyword>
<feature type="chain" id="PRO_0000267585" description="Type III pantothenate kinase">
    <location>
        <begin position="1"/>
        <end position="264"/>
    </location>
</feature>
<feature type="active site" description="Proton acceptor" evidence="1">
    <location>
        <position position="109"/>
    </location>
</feature>
<feature type="binding site" evidence="1">
    <location>
        <begin position="6"/>
        <end position="13"/>
    </location>
    <ligand>
        <name>ATP</name>
        <dbReference type="ChEBI" id="CHEBI:30616"/>
    </ligand>
</feature>
<feature type="binding site" evidence="1">
    <location>
        <position position="100"/>
    </location>
    <ligand>
        <name>substrate</name>
    </ligand>
</feature>
<feature type="binding site" evidence="1">
    <location>
        <begin position="107"/>
        <end position="110"/>
    </location>
    <ligand>
        <name>substrate</name>
    </ligand>
</feature>
<feature type="binding site" evidence="1">
    <location>
        <position position="129"/>
    </location>
    <ligand>
        <name>K(+)</name>
        <dbReference type="ChEBI" id="CHEBI:29103"/>
    </ligand>
</feature>
<feature type="binding site" evidence="1">
    <location>
        <position position="132"/>
    </location>
    <ligand>
        <name>ATP</name>
        <dbReference type="ChEBI" id="CHEBI:30616"/>
    </ligand>
</feature>
<feature type="binding site" evidence="1">
    <location>
        <position position="185"/>
    </location>
    <ligand>
        <name>substrate</name>
    </ligand>
</feature>